<keyword id="KW-0474">Menaquinone biosynthesis</keyword>
<keyword id="KW-0489">Methyltransferase</keyword>
<keyword id="KW-0949">S-adenosyl-L-methionine</keyword>
<keyword id="KW-0808">Transferase</keyword>
<organism>
    <name type="scientific">Bacillus cereus (strain B4264)</name>
    <dbReference type="NCBI Taxonomy" id="405532"/>
    <lineage>
        <taxon>Bacteria</taxon>
        <taxon>Bacillati</taxon>
        <taxon>Bacillota</taxon>
        <taxon>Bacilli</taxon>
        <taxon>Bacillales</taxon>
        <taxon>Bacillaceae</taxon>
        <taxon>Bacillus</taxon>
        <taxon>Bacillus cereus group</taxon>
    </lineage>
</organism>
<accession>B7HHR7</accession>
<dbReference type="EC" id="2.1.1.163" evidence="1"/>
<dbReference type="EMBL" id="CP001176">
    <property type="protein sequence ID" value="ACK59125.1"/>
    <property type="molecule type" value="Genomic_DNA"/>
</dbReference>
<dbReference type="RefSeq" id="WP_001187674.1">
    <property type="nucleotide sequence ID" value="NZ_VEHB01000003.1"/>
</dbReference>
<dbReference type="SMR" id="B7HHR7"/>
<dbReference type="KEGG" id="bcb:BCB4264_A1569"/>
<dbReference type="HOGENOM" id="CLU_037990_0_0_9"/>
<dbReference type="UniPathway" id="UPA00079">
    <property type="reaction ID" value="UER00169"/>
</dbReference>
<dbReference type="Proteomes" id="UP000007096">
    <property type="component" value="Chromosome"/>
</dbReference>
<dbReference type="GO" id="GO:0043770">
    <property type="term" value="F:demethylmenaquinone methyltransferase activity"/>
    <property type="evidence" value="ECO:0007669"/>
    <property type="project" value="UniProtKB-UniRule"/>
</dbReference>
<dbReference type="GO" id="GO:0009234">
    <property type="term" value="P:menaquinone biosynthetic process"/>
    <property type="evidence" value="ECO:0007669"/>
    <property type="project" value="UniProtKB-UniRule"/>
</dbReference>
<dbReference type="GO" id="GO:0032259">
    <property type="term" value="P:methylation"/>
    <property type="evidence" value="ECO:0007669"/>
    <property type="project" value="UniProtKB-KW"/>
</dbReference>
<dbReference type="CDD" id="cd02440">
    <property type="entry name" value="AdoMet_MTases"/>
    <property type="match status" value="1"/>
</dbReference>
<dbReference type="FunFam" id="3.40.50.150:FF:000086">
    <property type="entry name" value="Demethylmenaquinone methyltransferase"/>
    <property type="match status" value="1"/>
</dbReference>
<dbReference type="Gene3D" id="3.40.50.150">
    <property type="entry name" value="Vaccinia Virus protein VP39"/>
    <property type="match status" value="1"/>
</dbReference>
<dbReference type="HAMAP" id="MF_01813">
    <property type="entry name" value="MenG_UbiE_methyltr"/>
    <property type="match status" value="1"/>
</dbReference>
<dbReference type="InterPro" id="IPR014122">
    <property type="entry name" value="MenG_heptapren"/>
</dbReference>
<dbReference type="InterPro" id="IPR029063">
    <property type="entry name" value="SAM-dependent_MTases_sf"/>
</dbReference>
<dbReference type="InterPro" id="IPR004033">
    <property type="entry name" value="UbiE/COQ5_MeTrFase"/>
</dbReference>
<dbReference type="InterPro" id="IPR023576">
    <property type="entry name" value="UbiE/COQ5_MeTrFase_CS"/>
</dbReference>
<dbReference type="NCBIfam" id="TIGR02752">
    <property type="entry name" value="MenG_heptapren"/>
    <property type="match status" value="1"/>
</dbReference>
<dbReference type="NCBIfam" id="TIGR01934">
    <property type="entry name" value="MenG_MenH_UbiE"/>
    <property type="match status" value="1"/>
</dbReference>
<dbReference type="NCBIfam" id="NF001243">
    <property type="entry name" value="PRK00216.1-4"/>
    <property type="match status" value="1"/>
</dbReference>
<dbReference type="NCBIfam" id="NF001244">
    <property type="entry name" value="PRK00216.1-5"/>
    <property type="match status" value="1"/>
</dbReference>
<dbReference type="PANTHER" id="PTHR43591:SF24">
    <property type="entry name" value="2-METHOXY-6-POLYPRENYL-1,4-BENZOQUINOL METHYLASE, MITOCHONDRIAL"/>
    <property type="match status" value="1"/>
</dbReference>
<dbReference type="PANTHER" id="PTHR43591">
    <property type="entry name" value="METHYLTRANSFERASE"/>
    <property type="match status" value="1"/>
</dbReference>
<dbReference type="Pfam" id="PF01209">
    <property type="entry name" value="Ubie_methyltran"/>
    <property type="match status" value="1"/>
</dbReference>
<dbReference type="SUPFAM" id="SSF53335">
    <property type="entry name" value="S-adenosyl-L-methionine-dependent methyltransferases"/>
    <property type="match status" value="1"/>
</dbReference>
<dbReference type="PROSITE" id="PS51608">
    <property type="entry name" value="SAM_MT_UBIE"/>
    <property type="match status" value="1"/>
</dbReference>
<dbReference type="PROSITE" id="PS01183">
    <property type="entry name" value="UBIE_1"/>
    <property type="match status" value="1"/>
</dbReference>
<dbReference type="PROSITE" id="PS01184">
    <property type="entry name" value="UBIE_2"/>
    <property type="match status" value="1"/>
</dbReference>
<sequence>MQQSKEERVHDVFEKISDKYDVMNSVISFQRHKAWRKETMRIMDVQPGSQALDVCCGTADWTIALAGAVGEQGKVVGLDFSENMLSVGKQKVEALQLKQVELLHGNAMELPFEDNTFDYVTIGFGLRNVPDYMHVLKEMTRVVKPGGKVICLETSQPTMIGFRQGYILYFKYIMPLFGKMFAKSYKEYSWLQESASTFPGMKELAQMFEQAGLERVQVKPFTFGVAAMHLGIKPESK</sequence>
<evidence type="ECO:0000255" key="1">
    <source>
        <dbReference type="HAMAP-Rule" id="MF_01813"/>
    </source>
</evidence>
<proteinExistence type="inferred from homology"/>
<protein>
    <recommendedName>
        <fullName evidence="1">Demethylmenaquinone methyltransferase</fullName>
        <ecNumber evidence="1">2.1.1.163</ecNumber>
    </recommendedName>
</protein>
<name>MENG_BACC4</name>
<feature type="chain" id="PRO_1000187730" description="Demethylmenaquinone methyltransferase">
    <location>
        <begin position="1"/>
        <end position="237"/>
    </location>
</feature>
<feature type="binding site" evidence="1">
    <location>
        <position position="58"/>
    </location>
    <ligand>
        <name>S-adenosyl-L-methionine</name>
        <dbReference type="ChEBI" id="CHEBI:59789"/>
    </ligand>
</feature>
<feature type="binding site" evidence="1">
    <location>
        <position position="79"/>
    </location>
    <ligand>
        <name>S-adenosyl-L-methionine</name>
        <dbReference type="ChEBI" id="CHEBI:59789"/>
    </ligand>
</feature>
<feature type="binding site" evidence="1">
    <location>
        <begin position="106"/>
        <end position="107"/>
    </location>
    <ligand>
        <name>S-adenosyl-L-methionine</name>
        <dbReference type="ChEBI" id="CHEBI:59789"/>
    </ligand>
</feature>
<comment type="function">
    <text evidence="1">Methyltransferase required for the conversion of demethylmenaquinol (DMKH2) to menaquinol (MKH2).</text>
</comment>
<comment type="catalytic activity">
    <reaction evidence="1">
        <text>a 2-demethylmenaquinol + S-adenosyl-L-methionine = a menaquinol + S-adenosyl-L-homocysteine + H(+)</text>
        <dbReference type="Rhea" id="RHEA:42640"/>
        <dbReference type="Rhea" id="RHEA-COMP:9539"/>
        <dbReference type="Rhea" id="RHEA-COMP:9563"/>
        <dbReference type="ChEBI" id="CHEBI:15378"/>
        <dbReference type="ChEBI" id="CHEBI:18151"/>
        <dbReference type="ChEBI" id="CHEBI:55437"/>
        <dbReference type="ChEBI" id="CHEBI:57856"/>
        <dbReference type="ChEBI" id="CHEBI:59789"/>
        <dbReference type="EC" id="2.1.1.163"/>
    </reaction>
</comment>
<comment type="pathway">
    <text evidence="1">Quinol/quinone metabolism; menaquinone biosynthesis; menaquinol from 1,4-dihydroxy-2-naphthoate: step 2/2.</text>
</comment>
<comment type="similarity">
    <text evidence="1">Belongs to the class I-like SAM-binding methyltransferase superfamily. MenG/UbiE family.</text>
</comment>
<gene>
    <name evidence="1" type="primary">menG</name>
    <name type="ordered locus">BCB4264_A1569</name>
</gene>
<reference key="1">
    <citation type="submission" date="2008-10" db="EMBL/GenBank/DDBJ databases">
        <title>Genome sequence of Bacillus cereus B4264.</title>
        <authorList>
            <person name="Dodson R.J."/>
            <person name="Durkin A.S."/>
            <person name="Rosovitz M.J."/>
            <person name="Rasko D.A."/>
            <person name="Hoffmaster A."/>
            <person name="Ravel J."/>
            <person name="Sutton G."/>
        </authorList>
    </citation>
    <scope>NUCLEOTIDE SEQUENCE [LARGE SCALE GENOMIC DNA]</scope>
    <source>
        <strain>B4264</strain>
    </source>
</reference>